<organism>
    <name type="scientific">Dictyostelium discoideum</name>
    <name type="common">Social amoeba</name>
    <dbReference type="NCBI Taxonomy" id="44689"/>
    <lineage>
        <taxon>Eukaryota</taxon>
        <taxon>Amoebozoa</taxon>
        <taxon>Evosea</taxon>
        <taxon>Eumycetozoa</taxon>
        <taxon>Dictyostelia</taxon>
        <taxon>Dictyosteliales</taxon>
        <taxon>Dictyosteliaceae</taxon>
        <taxon>Dictyostelium</taxon>
    </lineage>
</organism>
<reference key="1">
    <citation type="journal article" date="2005" name="Nature">
        <title>The genome of the social amoeba Dictyostelium discoideum.</title>
        <authorList>
            <person name="Eichinger L."/>
            <person name="Pachebat J.A."/>
            <person name="Gloeckner G."/>
            <person name="Rajandream M.A."/>
            <person name="Sucgang R."/>
            <person name="Berriman M."/>
            <person name="Song J."/>
            <person name="Olsen R."/>
            <person name="Szafranski K."/>
            <person name="Xu Q."/>
            <person name="Tunggal B."/>
            <person name="Kummerfeld S."/>
            <person name="Madera M."/>
            <person name="Konfortov B.A."/>
            <person name="Rivero F."/>
            <person name="Bankier A.T."/>
            <person name="Lehmann R."/>
            <person name="Hamlin N."/>
            <person name="Davies R."/>
            <person name="Gaudet P."/>
            <person name="Fey P."/>
            <person name="Pilcher K."/>
            <person name="Chen G."/>
            <person name="Saunders D."/>
            <person name="Sodergren E.J."/>
            <person name="Davis P."/>
            <person name="Kerhornou A."/>
            <person name="Nie X."/>
            <person name="Hall N."/>
            <person name="Anjard C."/>
            <person name="Hemphill L."/>
            <person name="Bason N."/>
            <person name="Farbrother P."/>
            <person name="Desany B."/>
            <person name="Just E."/>
            <person name="Morio T."/>
            <person name="Rost R."/>
            <person name="Churcher C.M."/>
            <person name="Cooper J."/>
            <person name="Haydock S."/>
            <person name="van Driessche N."/>
            <person name="Cronin A."/>
            <person name="Goodhead I."/>
            <person name="Muzny D.M."/>
            <person name="Mourier T."/>
            <person name="Pain A."/>
            <person name="Lu M."/>
            <person name="Harper D."/>
            <person name="Lindsay R."/>
            <person name="Hauser H."/>
            <person name="James K.D."/>
            <person name="Quiles M."/>
            <person name="Madan Babu M."/>
            <person name="Saito T."/>
            <person name="Buchrieser C."/>
            <person name="Wardroper A."/>
            <person name="Felder M."/>
            <person name="Thangavelu M."/>
            <person name="Johnson D."/>
            <person name="Knights A."/>
            <person name="Loulseged H."/>
            <person name="Mungall K.L."/>
            <person name="Oliver K."/>
            <person name="Price C."/>
            <person name="Quail M.A."/>
            <person name="Urushihara H."/>
            <person name="Hernandez J."/>
            <person name="Rabbinowitsch E."/>
            <person name="Steffen D."/>
            <person name="Sanders M."/>
            <person name="Ma J."/>
            <person name="Kohara Y."/>
            <person name="Sharp S."/>
            <person name="Simmonds M.N."/>
            <person name="Spiegler S."/>
            <person name="Tivey A."/>
            <person name="Sugano S."/>
            <person name="White B."/>
            <person name="Walker D."/>
            <person name="Woodward J.R."/>
            <person name="Winckler T."/>
            <person name="Tanaka Y."/>
            <person name="Shaulsky G."/>
            <person name="Schleicher M."/>
            <person name="Weinstock G.M."/>
            <person name="Rosenthal A."/>
            <person name="Cox E.C."/>
            <person name="Chisholm R.L."/>
            <person name="Gibbs R.A."/>
            <person name="Loomis W.F."/>
            <person name="Platzer M."/>
            <person name="Kay R.R."/>
            <person name="Williams J.G."/>
            <person name="Dear P.H."/>
            <person name="Noegel A.A."/>
            <person name="Barrell B.G."/>
            <person name="Kuspa A."/>
        </authorList>
    </citation>
    <scope>NUCLEOTIDE SEQUENCE [LARGE SCALE GENOMIC DNA]</scope>
    <source>
        <strain>AX4</strain>
    </source>
</reference>
<reference key="2">
    <citation type="journal article" date="2009" name="J. Mol. Biol.">
        <title>Histone deacetylases regulate multicellular development in the social amoeba Dictyostelium discoideum.</title>
        <authorList>
            <person name="Sawarkar R."/>
            <person name="Visweswariah S.S."/>
            <person name="Nellen W."/>
            <person name="Nanjundiah V."/>
        </authorList>
    </citation>
    <scope>DEVELOPMENTAL STAGE</scope>
</reference>
<dbReference type="EC" id="3.5.1.98"/>
<dbReference type="EMBL" id="AAFI02000035">
    <property type="protein sequence ID" value="EAL67324.1"/>
    <property type="molecule type" value="Genomic_DNA"/>
</dbReference>
<dbReference type="RefSeq" id="XP_641298.1">
    <property type="nucleotide sequence ID" value="XM_636206.1"/>
</dbReference>
<dbReference type="SMR" id="Q54VQ7"/>
<dbReference type="FunCoup" id="Q54VQ7">
    <property type="interactions" value="475"/>
</dbReference>
<dbReference type="STRING" id="44689.Q54VQ7"/>
<dbReference type="GlyGen" id="Q54VQ7">
    <property type="glycosylation" value="1 site"/>
</dbReference>
<dbReference type="PaxDb" id="44689-DDB0237658"/>
<dbReference type="EnsemblProtists" id="EAL67324">
    <property type="protein sequence ID" value="EAL67324"/>
    <property type="gene ID" value="DDB_G0280195"/>
</dbReference>
<dbReference type="GeneID" id="8622431"/>
<dbReference type="KEGG" id="ddi:DDB_G0280195"/>
<dbReference type="dictyBase" id="DDB_G0280195">
    <property type="gene designation" value="hdaC"/>
</dbReference>
<dbReference type="VEuPathDB" id="AmoebaDB:DDB_G0280195"/>
<dbReference type="eggNOG" id="KOG1343">
    <property type="taxonomic scope" value="Eukaryota"/>
</dbReference>
<dbReference type="HOGENOM" id="CLU_240787_0_0_1"/>
<dbReference type="InParanoid" id="Q54VQ7"/>
<dbReference type="OMA" id="VESIYWI"/>
<dbReference type="Reactome" id="R-DDI-3108214">
    <property type="pathway name" value="SUMOylation of DNA damage response and repair proteins"/>
</dbReference>
<dbReference type="Reactome" id="R-DDI-3214815">
    <property type="pathway name" value="HDACs deacetylate histones"/>
</dbReference>
<dbReference type="PRO" id="PR:Q54VQ7"/>
<dbReference type="Proteomes" id="UP000002195">
    <property type="component" value="Chromosome 3"/>
</dbReference>
<dbReference type="GO" id="GO:0005737">
    <property type="term" value="C:cytoplasm"/>
    <property type="evidence" value="ECO:0007669"/>
    <property type="project" value="UniProtKB-SubCell"/>
</dbReference>
<dbReference type="GO" id="GO:0000118">
    <property type="term" value="C:histone deacetylase complex"/>
    <property type="evidence" value="ECO:0000318"/>
    <property type="project" value="GO_Central"/>
</dbReference>
<dbReference type="GO" id="GO:0004407">
    <property type="term" value="F:histone deacetylase activity"/>
    <property type="evidence" value="ECO:0000318"/>
    <property type="project" value="GO_Central"/>
</dbReference>
<dbReference type="GO" id="GO:0141221">
    <property type="term" value="F:histone deacetylase activity, hydrolytic mechanism"/>
    <property type="evidence" value="ECO:0007669"/>
    <property type="project" value="UniProtKB-EC"/>
</dbReference>
<dbReference type="GO" id="GO:0046872">
    <property type="term" value="F:metal ion binding"/>
    <property type="evidence" value="ECO:0007669"/>
    <property type="project" value="UniProtKB-KW"/>
</dbReference>
<dbReference type="GO" id="GO:0040029">
    <property type="term" value="P:epigenetic regulation of gene expression"/>
    <property type="evidence" value="ECO:0000318"/>
    <property type="project" value="GO_Central"/>
</dbReference>
<dbReference type="CDD" id="cd11599">
    <property type="entry name" value="HDAC_classII_2"/>
    <property type="match status" value="1"/>
</dbReference>
<dbReference type="Gene3D" id="3.40.800.20">
    <property type="entry name" value="Histone deacetylase domain"/>
    <property type="match status" value="1"/>
</dbReference>
<dbReference type="Gene3D" id="3.30.40.10">
    <property type="entry name" value="Zinc/RING finger domain, C3HC4 (zinc finger)"/>
    <property type="match status" value="1"/>
</dbReference>
<dbReference type="InterPro" id="IPR050284">
    <property type="entry name" value="HDAC_PDAC"/>
</dbReference>
<dbReference type="InterPro" id="IPR000286">
    <property type="entry name" value="His_deacetylse"/>
</dbReference>
<dbReference type="InterPro" id="IPR023801">
    <property type="entry name" value="His_deacetylse_dom"/>
</dbReference>
<dbReference type="InterPro" id="IPR037138">
    <property type="entry name" value="His_deacetylse_dom_sf"/>
</dbReference>
<dbReference type="InterPro" id="IPR023696">
    <property type="entry name" value="Ureohydrolase_dom_sf"/>
</dbReference>
<dbReference type="InterPro" id="IPR011011">
    <property type="entry name" value="Znf_FYVE_PHD"/>
</dbReference>
<dbReference type="InterPro" id="IPR013083">
    <property type="entry name" value="Znf_RING/FYVE/PHD"/>
</dbReference>
<dbReference type="PANTHER" id="PTHR10625">
    <property type="entry name" value="HISTONE DEACETYLASE HDAC1-RELATED"/>
    <property type="match status" value="1"/>
</dbReference>
<dbReference type="PANTHER" id="PTHR10625:SF40">
    <property type="entry name" value="TYPE-2 HISTONE DEACETYLASE 2"/>
    <property type="match status" value="1"/>
</dbReference>
<dbReference type="Pfam" id="PF00850">
    <property type="entry name" value="Hist_deacetyl"/>
    <property type="match status" value="1"/>
</dbReference>
<dbReference type="PRINTS" id="PR01270">
    <property type="entry name" value="HDASUPER"/>
</dbReference>
<dbReference type="SUPFAM" id="SSF52768">
    <property type="entry name" value="Arginase/deacetylase"/>
    <property type="match status" value="1"/>
</dbReference>
<dbReference type="SUPFAM" id="SSF57903">
    <property type="entry name" value="FYVE/PHD zinc finger"/>
    <property type="match status" value="1"/>
</dbReference>
<comment type="function">
    <text evidence="1">Responsible for the deacetylation of lysine residues on the N-terminal part of the core histones (H2A, H2B, H3 and H4). Histone deacetylation plays an important role in transcriptional regulation, cell cycle progression and developmental events. Histone deacetylases act via the formation of large multiprotein complexes (By similarity).</text>
</comment>
<comment type="catalytic activity">
    <reaction>
        <text>N(6)-acetyl-L-lysyl-[histone] + H2O = L-lysyl-[histone] + acetate</text>
        <dbReference type="Rhea" id="RHEA:58196"/>
        <dbReference type="Rhea" id="RHEA-COMP:9845"/>
        <dbReference type="Rhea" id="RHEA-COMP:11338"/>
        <dbReference type="ChEBI" id="CHEBI:15377"/>
        <dbReference type="ChEBI" id="CHEBI:29969"/>
        <dbReference type="ChEBI" id="CHEBI:30089"/>
        <dbReference type="ChEBI" id="CHEBI:61930"/>
        <dbReference type="EC" id="3.5.1.98"/>
    </reaction>
</comment>
<comment type="subcellular location">
    <subcellularLocation>
        <location evidence="1">Nucleus</location>
    </subcellularLocation>
    <subcellularLocation>
        <location evidence="1">Cytoplasm</location>
    </subcellularLocation>
</comment>
<comment type="developmental stage">
    <text evidence="3">Expressed after cells enter the multicellular phase upon starvation.</text>
</comment>
<comment type="similarity">
    <text evidence="4">Belongs to the histone deacetylase family. HD type 2 subfamily.</text>
</comment>
<accession>Q54VQ7</accession>
<sequence>MSTNNIIEGDEDTKTTITNESNTDNNNNNNDDNKNNTENTTSPTNNNNTNDNDNNSDNNNNKNNNNNNSQVTEEQQVTLEDSGSEDDINFEEHELSDSAEEDEDEMEDDDEDADGRQNQNPNSAGGKRRGRPSKVQQSTNTHLSQTTPESPTIFTPDGKVPKRISTSTNNTPNTQSALKTNKRPRLTSDEEKDLMLSEESDGGVGEDDDSIMSTNDKPQDENQSNQNQNNNNNNNNNTTTTTTTTNNSNNNNQNLNQNNNNNNNNNNINNNNNNNNSNNDNNNNNNRPARGRPKTNGSRSEERKRIQLQQYIQATQGSSTTTSDPNNQNNQINQINQNNQNNQNNQNNQNNSLGEEEFGEEFEEEEEDMGQPKKKTKYKTSKKSVPNHLDIRPCWFVGCVKADRSLKILRPCLIPTCKTHAIKSEVRISEALRRGDFVNDESSGVKDKVCGICGDKKDLHHCGNNGCAFGFCNDCVEIAAMKHNNHPNGNKWICWVCQFVRTKAKEKERTRWVKEQLNPGLTSISRKFRRGPELDMAQAQFLQQQQQQQTSPNEKRSSQFNSNNSNNNNNNNSNNNNNNSGFDPSGSPNNQQNQKRLRKKINASSDIYETRKYTKKRNDEDSAPPSPTSIIGNSVMVGSSGAAGGGIIKNTTVVVEQQGYSATPPSPNTLMVQQQQQLQQTHQQARLSQQQAQLQQLKALQQQHQHQQQNNGNFNNLIESVLSPNREPLNPIDNFVDQTFTAVKFFSTLSQNPPDEIKERIDNFVDLMMRIKTVRWASDYGLVWRMIEELSNLIKRNLLSSQSVVEMYSELKSLEEGALENMTTNARNVPLERAITMVFENHETAGLIGKECCSTRNALIYSIEVALRAIADYQHDLEDNLMEESLRSNKVSTEIEQIEHQIKANLDEIHKFKYQEVELLDSLSKVRGAIAAHESIRDTLQKKSSELKVDMLLIKNGISDKEKETKSQQATLENEIYALKLLITMVESIYWIHDYFYESRVGECEKLINNKLSQLQNKLETQIPHPPNALDNAIPNTTTTVMGEDGQPVIVPTTVDIKNKFKTIAIYHKICMQHKVPNFHLEKPDRIQVAVSCINEFASNPLVDIFDNPPEVDMRYVMAVHDANYIKKLETSLPPENSEFETHLESDKSGAMVTVASHKDFEGDDDNIYDTFVSHRSIKAALRASGSVCAAVDSVSRSGYTRAFCAIRPPGHHAGRYGRTSDAPSQGYCLINNVAIGAKYASLTAGYSRIAVVDFDVHHGNGTQEILSGDDNFLFISIHVCDEKRYFYPGTGQDVGDIDEVSGQFDGNILNIGLKRNTGSAVFLQQWMNKIIPRLEAYKPQLIFLSAGFDGHKDDPTNGLKLNEEDYFVITKMIKTVAFKYCKGRIISVLEGGYGIEKTNSLQRCVNSHLKALIEDTDEEIHLANISYGHFSETQETAIPKFNINNFISNPNKRGKKNNLNTINFINNNMNNINNNITNSLSNKQLERQKQLQQQQQQAQQAQQQQSPQQSQTIENTSITTTTTTTSTTTTLSTSDSESNNNINNNNNDYNNNNNNNSNNNNNNSNNNQPTNFNSSTSSPILSGNNNNNNNNNNNNNNNNINNNNNNNSNNNNNMNTSNPTNQQSSVIISDDMDDVQTNSNPPNPQYPLSPNSVNRGNNPSNISMSGAQRSAPLIISPKPSNSPNSPSTSNNNGTPQNINNSDN</sequence>
<evidence type="ECO:0000250" key="1"/>
<evidence type="ECO:0000256" key="2">
    <source>
        <dbReference type="SAM" id="MobiDB-lite"/>
    </source>
</evidence>
<evidence type="ECO:0000269" key="3">
    <source>
    </source>
</evidence>
<evidence type="ECO:0000305" key="4"/>
<protein>
    <recommendedName>
        <fullName>Type-2 histone deacetylase 2</fullName>
        <shortName>DdHdaC</shortName>
        <ecNumber>3.5.1.98</ecNumber>
    </recommendedName>
</protein>
<feature type="chain" id="PRO_0000331372" description="Type-2 histone deacetylase 2">
    <location>
        <begin position="1"/>
        <end position="1704"/>
    </location>
</feature>
<feature type="region of interest" description="Disordered" evidence="2">
    <location>
        <begin position="1"/>
        <end position="303"/>
    </location>
</feature>
<feature type="region of interest" description="Disordered" evidence="2">
    <location>
        <begin position="315"/>
        <end position="383"/>
    </location>
</feature>
<feature type="region of interest" description="Disordered" evidence="2">
    <location>
        <begin position="540"/>
        <end position="634"/>
    </location>
</feature>
<feature type="region of interest" description="Disordered" evidence="2">
    <location>
        <begin position="1485"/>
        <end position="1704"/>
    </location>
</feature>
<feature type="compositionally biased region" description="Low complexity" evidence="2">
    <location>
        <begin position="15"/>
        <end position="69"/>
    </location>
</feature>
<feature type="compositionally biased region" description="Polar residues" evidence="2">
    <location>
        <begin position="70"/>
        <end position="81"/>
    </location>
</feature>
<feature type="compositionally biased region" description="Acidic residues" evidence="2">
    <location>
        <begin position="97"/>
        <end position="113"/>
    </location>
</feature>
<feature type="compositionally biased region" description="Polar residues" evidence="2">
    <location>
        <begin position="134"/>
        <end position="153"/>
    </location>
</feature>
<feature type="compositionally biased region" description="Low complexity" evidence="2">
    <location>
        <begin position="165"/>
        <end position="176"/>
    </location>
</feature>
<feature type="compositionally biased region" description="Basic and acidic residues" evidence="2">
    <location>
        <begin position="186"/>
        <end position="195"/>
    </location>
</feature>
<feature type="compositionally biased region" description="Acidic residues" evidence="2">
    <location>
        <begin position="196"/>
        <end position="210"/>
    </location>
</feature>
<feature type="compositionally biased region" description="Low complexity" evidence="2">
    <location>
        <begin position="222"/>
        <end position="286"/>
    </location>
</feature>
<feature type="compositionally biased region" description="Polar residues" evidence="2">
    <location>
        <begin position="315"/>
        <end position="325"/>
    </location>
</feature>
<feature type="compositionally biased region" description="Low complexity" evidence="2">
    <location>
        <begin position="326"/>
        <end position="351"/>
    </location>
</feature>
<feature type="compositionally biased region" description="Acidic residues" evidence="2">
    <location>
        <begin position="354"/>
        <end position="369"/>
    </location>
</feature>
<feature type="compositionally biased region" description="Basic residues" evidence="2">
    <location>
        <begin position="372"/>
        <end position="382"/>
    </location>
</feature>
<feature type="compositionally biased region" description="Low complexity" evidence="2">
    <location>
        <begin position="540"/>
        <end position="549"/>
    </location>
</feature>
<feature type="compositionally biased region" description="Low complexity" evidence="2">
    <location>
        <begin position="561"/>
        <end position="580"/>
    </location>
</feature>
<feature type="compositionally biased region" description="Basic and acidic residues" evidence="2">
    <location>
        <begin position="608"/>
        <end position="620"/>
    </location>
</feature>
<feature type="compositionally biased region" description="Low complexity" evidence="2">
    <location>
        <begin position="1491"/>
        <end position="1616"/>
    </location>
</feature>
<feature type="compositionally biased region" description="Polar residues" evidence="2">
    <location>
        <begin position="1649"/>
        <end position="1669"/>
    </location>
</feature>
<feature type="compositionally biased region" description="Low complexity" evidence="2">
    <location>
        <begin position="1677"/>
        <end position="1698"/>
    </location>
</feature>
<feature type="binding site" evidence="1">
    <location>
        <position position="1165"/>
    </location>
    <ligand>
        <name>substrate</name>
    </ligand>
</feature>
<feature type="binding site" evidence="1">
    <location>
        <position position="1227"/>
    </location>
    <ligand>
        <name>substrate</name>
    </ligand>
</feature>
<feature type="binding site" evidence="1">
    <location>
        <position position="1256"/>
    </location>
    <ligand>
        <name>a divalent metal cation</name>
        <dbReference type="ChEBI" id="CHEBI:60240"/>
    </ligand>
</feature>
<feature type="binding site" evidence="1">
    <location>
        <position position="1258"/>
    </location>
    <ligand>
        <name>a divalent metal cation</name>
        <dbReference type="ChEBI" id="CHEBI:60240"/>
    </ligand>
</feature>
<feature type="binding site" evidence="1">
    <location>
        <position position="1350"/>
    </location>
    <ligand>
        <name>a divalent metal cation</name>
        <dbReference type="ChEBI" id="CHEBI:60240"/>
    </ligand>
</feature>
<gene>
    <name type="primary">hdaC</name>
    <name type="ORF">DDB_G0280195</name>
</gene>
<proteinExistence type="evidence at transcript level"/>
<keyword id="KW-0156">Chromatin regulator</keyword>
<keyword id="KW-0963">Cytoplasm</keyword>
<keyword id="KW-0378">Hydrolase</keyword>
<keyword id="KW-0479">Metal-binding</keyword>
<keyword id="KW-0539">Nucleus</keyword>
<keyword id="KW-1185">Reference proteome</keyword>
<keyword id="KW-0678">Repressor</keyword>
<keyword id="KW-0804">Transcription</keyword>
<keyword id="KW-0805">Transcription regulation</keyword>
<name>HDA22_DICDI</name>